<name>ACKA_PHOV8</name>
<keyword id="KW-0067">ATP-binding</keyword>
<keyword id="KW-0963">Cytoplasm</keyword>
<keyword id="KW-0418">Kinase</keyword>
<keyword id="KW-0460">Magnesium</keyword>
<keyword id="KW-0479">Metal-binding</keyword>
<keyword id="KW-0547">Nucleotide-binding</keyword>
<keyword id="KW-0808">Transferase</keyword>
<organism>
    <name type="scientific">Phocaeicola vulgatus (strain ATCC 8482 / DSM 1447 / JCM 5826 / CCUG 4940 / NBRC 14291 / NCTC 11154)</name>
    <name type="common">Bacteroides vulgatus</name>
    <dbReference type="NCBI Taxonomy" id="435590"/>
    <lineage>
        <taxon>Bacteria</taxon>
        <taxon>Pseudomonadati</taxon>
        <taxon>Bacteroidota</taxon>
        <taxon>Bacteroidia</taxon>
        <taxon>Bacteroidales</taxon>
        <taxon>Bacteroidaceae</taxon>
        <taxon>Phocaeicola</taxon>
    </lineage>
</organism>
<reference key="1">
    <citation type="journal article" date="2007" name="PLoS Biol.">
        <title>Evolution of symbiotic bacteria in the distal human intestine.</title>
        <authorList>
            <person name="Xu J."/>
            <person name="Mahowald M.A."/>
            <person name="Ley R.E."/>
            <person name="Lozupone C.A."/>
            <person name="Hamady M."/>
            <person name="Martens E.C."/>
            <person name="Henrissat B."/>
            <person name="Coutinho P.M."/>
            <person name="Minx P."/>
            <person name="Latreille P."/>
            <person name="Cordum H."/>
            <person name="Van Brunt A."/>
            <person name="Kim K."/>
            <person name="Fulton R.S."/>
            <person name="Fulton L.A."/>
            <person name="Clifton S.W."/>
            <person name="Wilson R.K."/>
            <person name="Knight R.D."/>
            <person name="Gordon J.I."/>
        </authorList>
    </citation>
    <scope>NUCLEOTIDE SEQUENCE [LARGE SCALE GENOMIC DNA]</scope>
    <source>
        <strain>ATCC 8482 / DSM 1447 / JCM 5826 / CCUG 4940 / NBRC 14291 / NCTC 11154</strain>
    </source>
</reference>
<evidence type="ECO:0000255" key="1">
    <source>
        <dbReference type="HAMAP-Rule" id="MF_00020"/>
    </source>
</evidence>
<sequence>MKILVLNCGSSSIKYKLFDMTTKEVLAQGGIEKIGLVGSFLKLTLPNGEKKILEKDIPEHTAGIEFILNTLVSPEYGAIKSLDEINAVGHRMVHGGERFSESVLLNKEVLDAFIACNDLAPLHNPANLKGVNAVSAILPNVPQVGVFDTAFHQTMPDYAYMYAIPYELYEKYGVRRYGFHGTSHRYVSQRVCEFLGVDPKGKKIITCHIGNGGSISAIKDGKCIDTSMGLTPLEGLVMGTRSGDIDAGAVTFIMEKEGLNATGVSNLLNKKSGVLGVSGVSSDMRELEAAVAAGNPKAILAEKMYFYRIKKYIGAYAAALGGVDIILFTGGVGENQANCRSEVCEGLEFMGVKIDLEKNKVRGEEAIISADDSKVTVAVIPTDEELMIASDTLAILNK</sequence>
<protein>
    <recommendedName>
        <fullName evidence="1">Acetate kinase</fullName>
        <ecNumber evidence="1">2.7.2.1</ecNumber>
    </recommendedName>
    <alternativeName>
        <fullName evidence="1">Acetokinase</fullName>
    </alternativeName>
</protein>
<accession>A6KXS0</accession>
<proteinExistence type="inferred from homology"/>
<dbReference type="EC" id="2.7.2.1" evidence="1"/>
<dbReference type="EMBL" id="CP000139">
    <property type="protein sequence ID" value="ABR38234.1"/>
    <property type="molecule type" value="Genomic_DNA"/>
</dbReference>
<dbReference type="RefSeq" id="WP_005840688.1">
    <property type="nucleotide sequence ID" value="NZ_JANSWM010000025.1"/>
</dbReference>
<dbReference type="SMR" id="A6KXS0"/>
<dbReference type="STRING" id="435590.BVU_0524"/>
<dbReference type="PaxDb" id="435590-BVU_0524"/>
<dbReference type="GeneID" id="5301493"/>
<dbReference type="KEGG" id="bvu:BVU_0524"/>
<dbReference type="eggNOG" id="COG0282">
    <property type="taxonomic scope" value="Bacteria"/>
</dbReference>
<dbReference type="HOGENOM" id="CLU_020352_0_1_10"/>
<dbReference type="BioCyc" id="BVUL435590:G1G59-550-MONOMER"/>
<dbReference type="UniPathway" id="UPA00340">
    <property type="reaction ID" value="UER00458"/>
</dbReference>
<dbReference type="Proteomes" id="UP000002861">
    <property type="component" value="Chromosome"/>
</dbReference>
<dbReference type="GO" id="GO:0005737">
    <property type="term" value="C:cytoplasm"/>
    <property type="evidence" value="ECO:0007669"/>
    <property type="project" value="UniProtKB-SubCell"/>
</dbReference>
<dbReference type="GO" id="GO:0008776">
    <property type="term" value="F:acetate kinase activity"/>
    <property type="evidence" value="ECO:0007669"/>
    <property type="project" value="UniProtKB-UniRule"/>
</dbReference>
<dbReference type="GO" id="GO:0005524">
    <property type="term" value="F:ATP binding"/>
    <property type="evidence" value="ECO:0007669"/>
    <property type="project" value="UniProtKB-KW"/>
</dbReference>
<dbReference type="GO" id="GO:0000287">
    <property type="term" value="F:magnesium ion binding"/>
    <property type="evidence" value="ECO:0007669"/>
    <property type="project" value="UniProtKB-UniRule"/>
</dbReference>
<dbReference type="GO" id="GO:0006083">
    <property type="term" value="P:acetate metabolic process"/>
    <property type="evidence" value="ECO:0007669"/>
    <property type="project" value="TreeGrafter"/>
</dbReference>
<dbReference type="GO" id="GO:0006085">
    <property type="term" value="P:acetyl-CoA biosynthetic process"/>
    <property type="evidence" value="ECO:0007669"/>
    <property type="project" value="UniProtKB-UniRule"/>
</dbReference>
<dbReference type="CDD" id="cd24010">
    <property type="entry name" value="ASKHA_NBD_AcK_PK"/>
    <property type="match status" value="1"/>
</dbReference>
<dbReference type="Gene3D" id="3.30.420.40">
    <property type="match status" value="2"/>
</dbReference>
<dbReference type="HAMAP" id="MF_00020">
    <property type="entry name" value="Acetate_kinase"/>
    <property type="match status" value="1"/>
</dbReference>
<dbReference type="InterPro" id="IPR004372">
    <property type="entry name" value="Ac/propionate_kinase"/>
</dbReference>
<dbReference type="InterPro" id="IPR000890">
    <property type="entry name" value="Aliphatic_acid_kin_short-chain"/>
</dbReference>
<dbReference type="InterPro" id="IPR023865">
    <property type="entry name" value="Aliphatic_acid_kinase_CS"/>
</dbReference>
<dbReference type="InterPro" id="IPR043129">
    <property type="entry name" value="ATPase_NBD"/>
</dbReference>
<dbReference type="NCBIfam" id="TIGR00016">
    <property type="entry name" value="ackA"/>
    <property type="match status" value="1"/>
</dbReference>
<dbReference type="PANTHER" id="PTHR21060">
    <property type="entry name" value="ACETATE KINASE"/>
    <property type="match status" value="1"/>
</dbReference>
<dbReference type="PANTHER" id="PTHR21060:SF15">
    <property type="entry name" value="ACETATE KINASE-RELATED"/>
    <property type="match status" value="1"/>
</dbReference>
<dbReference type="Pfam" id="PF00871">
    <property type="entry name" value="Acetate_kinase"/>
    <property type="match status" value="1"/>
</dbReference>
<dbReference type="PIRSF" id="PIRSF000722">
    <property type="entry name" value="Acetate_prop_kin"/>
    <property type="match status" value="1"/>
</dbReference>
<dbReference type="PRINTS" id="PR00471">
    <property type="entry name" value="ACETATEKNASE"/>
</dbReference>
<dbReference type="SUPFAM" id="SSF53067">
    <property type="entry name" value="Actin-like ATPase domain"/>
    <property type="match status" value="2"/>
</dbReference>
<dbReference type="PROSITE" id="PS01075">
    <property type="entry name" value="ACETATE_KINASE_1"/>
    <property type="match status" value="1"/>
</dbReference>
<dbReference type="PROSITE" id="PS01076">
    <property type="entry name" value="ACETATE_KINASE_2"/>
    <property type="match status" value="1"/>
</dbReference>
<gene>
    <name evidence="1" type="primary">ackA</name>
    <name type="ordered locus">BVU_0524</name>
</gene>
<comment type="function">
    <text evidence="1">Catalyzes the formation of acetyl phosphate from acetate and ATP. Can also catalyze the reverse reaction.</text>
</comment>
<comment type="catalytic activity">
    <reaction evidence="1">
        <text>acetate + ATP = acetyl phosphate + ADP</text>
        <dbReference type="Rhea" id="RHEA:11352"/>
        <dbReference type="ChEBI" id="CHEBI:22191"/>
        <dbReference type="ChEBI" id="CHEBI:30089"/>
        <dbReference type="ChEBI" id="CHEBI:30616"/>
        <dbReference type="ChEBI" id="CHEBI:456216"/>
        <dbReference type="EC" id="2.7.2.1"/>
    </reaction>
</comment>
<comment type="cofactor">
    <cofactor evidence="1">
        <name>Mg(2+)</name>
        <dbReference type="ChEBI" id="CHEBI:18420"/>
    </cofactor>
    <cofactor evidence="1">
        <name>Mn(2+)</name>
        <dbReference type="ChEBI" id="CHEBI:29035"/>
    </cofactor>
    <text evidence="1">Mg(2+). Can also accept Mn(2+).</text>
</comment>
<comment type="pathway">
    <text evidence="1">Metabolic intermediate biosynthesis; acetyl-CoA biosynthesis; acetyl-CoA from acetate: step 1/2.</text>
</comment>
<comment type="subunit">
    <text evidence="1">Homodimer.</text>
</comment>
<comment type="subcellular location">
    <subcellularLocation>
        <location evidence="1">Cytoplasm</location>
    </subcellularLocation>
</comment>
<comment type="similarity">
    <text evidence="1">Belongs to the acetokinase family.</text>
</comment>
<feature type="chain" id="PRO_1000002210" description="Acetate kinase">
    <location>
        <begin position="1"/>
        <end position="398"/>
    </location>
</feature>
<feature type="active site" description="Proton donor/acceptor" evidence="1">
    <location>
        <position position="148"/>
    </location>
</feature>
<feature type="binding site" evidence="1">
    <location>
        <position position="7"/>
    </location>
    <ligand>
        <name>Mg(2+)</name>
        <dbReference type="ChEBI" id="CHEBI:18420"/>
    </ligand>
</feature>
<feature type="binding site" evidence="1">
    <location>
        <position position="14"/>
    </location>
    <ligand>
        <name>ATP</name>
        <dbReference type="ChEBI" id="CHEBI:30616"/>
    </ligand>
</feature>
<feature type="binding site" evidence="1">
    <location>
        <position position="91"/>
    </location>
    <ligand>
        <name>substrate</name>
    </ligand>
</feature>
<feature type="binding site" evidence="1">
    <location>
        <begin position="208"/>
        <end position="212"/>
    </location>
    <ligand>
        <name>ATP</name>
        <dbReference type="ChEBI" id="CHEBI:30616"/>
    </ligand>
</feature>
<feature type="binding site" evidence="1">
    <location>
        <begin position="283"/>
        <end position="285"/>
    </location>
    <ligand>
        <name>ATP</name>
        <dbReference type="ChEBI" id="CHEBI:30616"/>
    </ligand>
</feature>
<feature type="binding site" evidence="1">
    <location>
        <begin position="331"/>
        <end position="335"/>
    </location>
    <ligand>
        <name>ATP</name>
        <dbReference type="ChEBI" id="CHEBI:30616"/>
    </ligand>
</feature>
<feature type="binding site" evidence="1">
    <location>
        <position position="384"/>
    </location>
    <ligand>
        <name>Mg(2+)</name>
        <dbReference type="ChEBI" id="CHEBI:18420"/>
    </ligand>
</feature>
<feature type="site" description="Transition state stabilizer" evidence="1">
    <location>
        <position position="180"/>
    </location>
</feature>
<feature type="site" description="Transition state stabilizer" evidence="1">
    <location>
        <position position="241"/>
    </location>
</feature>